<organism>
    <name type="scientific">Pisum sativum</name>
    <name type="common">Garden pea</name>
    <name type="synonym">Lathyrus oleraceus</name>
    <dbReference type="NCBI Taxonomy" id="3888"/>
    <lineage>
        <taxon>Eukaryota</taxon>
        <taxon>Viridiplantae</taxon>
        <taxon>Streptophyta</taxon>
        <taxon>Embryophyta</taxon>
        <taxon>Tracheophyta</taxon>
        <taxon>Spermatophyta</taxon>
        <taxon>Magnoliopsida</taxon>
        <taxon>eudicotyledons</taxon>
        <taxon>Gunneridae</taxon>
        <taxon>Pentapetalae</taxon>
        <taxon>rosids</taxon>
        <taxon>fabids</taxon>
        <taxon>Fabales</taxon>
        <taxon>Fabaceae</taxon>
        <taxon>Papilionoideae</taxon>
        <taxon>50 kb inversion clade</taxon>
        <taxon>NPAAA clade</taxon>
        <taxon>Hologalegina</taxon>
        <taxon>IRL clade</taxon>
        <taxon>Fabeae</taxon>
        <taxon>Pisum</taxon>
    </lineage>
</organism>
<feature type="chain" id="PRO_0000124486" description="Small ribosomal subunit protein uS7c">
    <location>
        <begin position="1"/>
        <end position="156"/>
    </location>
</feature>
<geneLocation type="chloroplast"/>
<proteinExistence type="inferred from homology"/>
<sequence length="156" mass="17834">MSRRGTAEKKKIAKSDPIYRNRVVNMLVNRIMKHGKKSLAYLIIYRAMKRIQQKTKTNPLSVLREAIRRVTPNLAVKARRVSGSTHQVPIEIESTQGKELAIRWLLAASRKRPGRNMAFKLSSELVDAAKGSGDAIRKKEETHRMAEANRTFAHFR</sequence>
<protein>
    <recommendedName>
        <fullName evidence="2">Small ribosomal subunit protein uS7c</fullName>
    </recommendedName>
    <alternativeName>
        <fullName>30S ribosomal protein S7, chloroplastic</fullName>
    </alternativeName>
</protein>
<accession>Q6KGX3</accession>
<reference key="1">
    <citation type="submission" date="2000-02" db="EMBL/GenBank/DDBJ databases">
        <title>Long branches in the seed plants and the root of the angiosperms.</title>
        <authorList>
            <person name="Graham S.W."/>
            <person name="Reeves P.A."/>
            <person name="Burns A."/>
            <person name="Olmstead R.G."/>
        </authorList>
    </citation>
    <scope>NUCLEOTIDE SEQUENCE [GENOMIC DNA]</scope>
</reference>
<name>RR7_PEA</name>
<evidence type="ECO:0000250" key="1"/>
<evidence type="ECO:0000305" key="2"/>
<comment type="function">
    <text evidence="1">One of the primary rRNA binding proteins, it binds directly to 16S rRNA where it nucleates assembly of the head domain of the 30S subunit.</text>
</comment>
<comment type="subunit">
    <text>Part of the 30S ribosomal subunit.</text>
</comment>
<comment type="subcellular location">
    <subcellularLocation>
        <location>Plastid</location>
        <location>Chloroplast</location>
    </subcellularLocation>
</comment>
<comment type="similarity">
    <text evidence="2">Belongs to the universal ribosomal protein uS7 family.</text>
</comment>
<dbReference type="EMBL" id="AF238072">
    <property type="protein sequence ID" value="AAQ14221.1"/>
    <property type="molecule type" value="Genomic_DNA"/>
</dbReference>
<dbReference type="SMR" id="Q6KGX3"/>
<dbReference type="GO" id="GO:0009507">
    <property type="term" value="C:chloroplast"/>
    <property type="evidence" value="ECO:0007669"/>
    <property type="project" value="UniProtKB-SubCell"/>
</dbReference>
<dbReference type="GO" id="GO:0015935">
    <property type="term" value="C:small ribosomal subunit"/>
    <property type="evidence" value="ECO:0007669"/>
    <property type="project" value="InterPro"/>
</dbReference>
<dbReference type="GO" id="GO:0019843">
    <property type="term" value="F:rRNA binding"/>
    <property type="evidence" value="ECO:0007669"/>
    <property type="project" value="UniProtKB-UniRule"/>
</dbReference>
<dbReference type="GO" id="GO:0003735">
    <property type="term" value="F:structural constituent of ribosome"/>
    <property type="evidence" value="ECO:0007669"/>
    <property type="project" value="InterPro"/>
</dbReference>
<dbReference type="GO" id="GO:0006412">
    <property type="term" value="P:translation"/>
    <property type="evidence" value="ECO:0007669"/>
    <property type="project" value="UniProtKB-UniRule"/>
</dbReference>
<dbReference type="CDD" id="cd14871">
    <property type="entry name" value="uS7_Chloroplast"/>
    <property type="match status" value="1"/>
</dbReference>
<dbReference type="FunFam" id="1.10.455.10:FF:000001">
    <property type="entry name" value="30S ribosomal protein S7"/>
    <property type="match status" value="1"/>
</dbReference>
<dbReference type="Gene3D" id="1.10.455.10">
    <property type="entry name" value="Ribosomal protein S7 domain"/>
    <property type="match status" value="1"/>
</dbReference>
<dbReference type="HAMAP" id="MF_00480_B">
    <property type="entry name" value="Ribosomal_uS7_B"/>
    <property type="match status" value="1"/>
</dbReference>
<dbReference type="InterPro" id="IPR000235">
    <property type="entry name" value="Ribosomal_uS7"/>
</dbReference>
<dbReference type="InterPro" id="IPR005717">
    <property type="entry name" value="Ribosomal_uS7_bac/org-type"/>
</dbReference>
<dbReference type="InterPro" id="IPR020606">
    <property type="entry name" value="Ribosomal_uS7_CS"/>
</dbReference>
<dbReference type="InterPro" id="IPR023798">
    <property type="entry name" value="Ribosomal_uS7_dom"/>
</dbReference>
<dbReference type="InterPro" id="IPR036823">
    <property type="entry name" value="Ribosomal_uS7_dom_sf"/>
</dbReference>
<dbReference type="NCBIfam" id="TIGR01029">
    <property type="entry name" value="rpsG_bact"/>
    <property type="match status" value="1"/>
</dbReference>
<dbReference type="PANTHER" id="PTHR11205">
    <property type="entry name" value="RIBOSOMAL PROTEIN S7"/>
    <property type="match status" value="1"/>
</dbReference>
<dbReference type="Pfam" id="PF00177">
    <property type="entry name" value="Ribosomal_S7"/>
    <property type="match status" value="1"/>
</dbReference>
<dbReference type="PIRSF" id="PIRSF002122">
    <property type="entry name" value="RPS7p_RPS7a_RPS5e_RPS7o"/>
    <property type="match status" value="1"/>
</dbReference>
<dbReference type="SUPFAM" id="SSF47973">
    <property type="entry name" value="Ribosomal protein S7"/>
    <property type="match status" value="1"/>
</dbReference>
<dbReference type="PROSITE" id="PS00052">
    <property type="entry name" value="RIBOSOMAL_S7"/>
    <property type="match status" value="1"/>
</dbReference>
<keyword id="KW-0150">Chloroplast</keyword>
<keyword id="KW-0934">Plastid</keyword>
<keyword id="KW-0687">Ribonucleoprotein</keyword>
<keyword id="KW-0689">Ribosomal protein</keyword>
<keyword id="KW-0694">RNA-binding</keyword>
<keyword id="KW-0699">rRNA-binding</keyword>
<gene>
    <name type="primary">rps7</name>
</gene>